<gene>
    <name evidence="1" type="primary">flgI</name>
    <name type="ordered locus">Gmet_0434</name>
</gene>
<keyword id="KW-0975">Bacterial flagellum</keyword>
<keyword id="KW-0574">Periplasm</keyword>
<keyword id="KW-1185">Reference proteome</keyword>
<keyword id="KW-0732">Signal</keyword>
<accession>Q39YJ7</accession>
<sequence length="365" mass="38379">MIKRIISIVFLLLTLPQLALAVRIKDIASFDGVRENQLIGYGLVVGLNGTGDSDQTNFPVQSLANVLERMGVTVNRNDITVKNVAAVMVTANLPPFAKQGTRIDTLVSSMGDAKSIAGGTLLMTPLKGADGRVYAVAQGGVLTNSFSYGGQAASAQKNHPTAGRVPNGGLVELELPNVLSDRGQLRLNLHQPDFTTATRIAQAVNERFKGGVAAATDPGAVMMNLPEAYKGRVVEFVADMERLEVRPDAMAKVVLNERTGTIVIGDNVRISTVAVSHGNLTLYIKETPKVSQPAPFSKTGETVVVPRTEIKVNEGGGGLAVVKEGASIGEVVRALNALGVTPRDLIGILQAIKAAGAMQAEVEVI</sequence>
<reference key="1">
    <citation type="journal article" date="2009" name="BMC Microbiol.">
        <title>The genome sequence of Geobacter metallireducens: features of metabolism, physiology and regulation common and dissimilar to Geobacter sulfurreducens.</title>
        <authorList>
            <person name="Aklujkar M."/>
            <person name="Krushkal J."/>
            <person name="DiBartolo G."/>
            <person name="Lapidus A."/>
            <person name="Land M.L."/>
            <person name="Lovley D.R."/>
        </authorList>
    </citation>
    <scope>NUCLEOTIDE SEQUENCE [LARGE SCALE GENOMIC DNA]</scope>
    <source>
        <strain>ATCC 53774 / DSM 7210 / GS-15</strain>
    </source>
</reference>
<protein>
    <recommendedName>
        <fullName evidence="1">Flagellar P-ring protein</fullName>
    </recommendedName>
    <alternativeName>
        <fullName evidence="1">Basal body P-ring protein</fullName>
    </alternativeName>
</protein>
<name>FLGI_GEOMG</name>
<proteinExistence type="inferred from homology"/>
<feature type="signal peptide" evidence="1">
    <location>
        <begin position="1"/>
        <end position="21"/>
    </location>
</feature>
<feature type="chain" id="PRO_0000236301" description="Flagellar P-ring protein">
    <location>
        <begin position="22"/>
        <end position="365"/>
    </location>
</feature>
<evidence type="ECO:0000255" key="1">
    <source>
        <dbReference type="HAMAP-Rule" id="MF_00416"/>
    </source>
</evidence>
<dbReference type="EMBL" id="CP000148">
    <property type="protein sequence ID" value="ABB30677.1"/>
    <property type="molecule type" value="Genomic_DNA"/>
</dbReference>
<dbReference type="RefSeq" id="WP_004512406.1">
    <property type="nucleotide sequence ID" value="NC_007517.1"/>
</dbReference>
<dbReference type="SMR" id="Q39YJ7"/>
<dbReference type="STRING" id="269799.Gmet_0434"/>
<dbReference type="KEGG" id="gme:Gmet_0434"/>
<dbReference type="eggNOG" id="COG1706">
    <property type="taxonomic scope" value="Bacteria"/>
</dbReference>
<dbReference type="HOGENOM" id="CLU_045235_1_0_7"/>
<dbReference type="Proteomes" id="UP000007073">
    <property type="component" value="Chromosome"/>
</dbReference>
<dbReference type="GO" id="GO:0009428">
    <property type="term" value="C:bacterial-type flagellum basal body, distal rod, P ring"/>
    <property type="evidence" value="ECO:0007669"/>
    <property type="project" value="InterPro"/>
</dbReference>
<dbReference type="GO" id="GO:0030288">
    <property type="term" value="C:outer membrane-bounded periplasmic space"/>
    <property type="evidence" value="ECO:0007669"/>
    <property type="project" value="InterPro"/>
</dbReference>
<dbReference type="GO" id="GO:0005198">
    <property type="term" value="F:structural molecule activity"/>
    <property type="evidence" value="ECO:0007669"/>
    <property type="project" value="InterPro"/>
</dbReference>
<dbReference type="GO" id="GO:0071973">
    <property type="term" value="P:bacterial-type flagellum-dependent cell motility"/>
    <property type="evidence" value="ECO:0007669"/>
    <property type="project" value="InterPro"/>
</dbReference>
<dbReference type="HAMAP" id="MF_00416">
    <property type="entry name" value="FlgI"/>
    <property type="match status" value="1"/>
</dbReference>
<dbReference type="InterPro" id="IPR001782">
    <property type="entry name" value="Flag_FlgI"/>
</dbReference>
<dbReference type="NCBIfam" id="NF003676">
    <property type="entry name" value="PRK05303.1"/>
    <property type="match status" value="1"/>
</dbReference>
<dbReference type="PANTHER" id="PTHR30381">
    <property type="entry name" value="FLAGELLAR P-RING PERIPLASMIC PROTEIN FLGI"/>
    <property type="match status" value="1"/>
</dbReference>
<dbReference type="PANTHER" id="PTHR30381:SF0">
    <property type="entry name" value="FLAGELLAR P-RING PROTEIN"/>
    <property type="match status" value="1"/>
</dbReference>
<dbReference type="Pfam" id="PF02119">
    <property type="entry name" value="FlgI"/>
    <property type="match status" value="1"/>
</dbReference>
<dbReference type="PRINTS" id="PR01010">
    <property type="entry name" value="FLGPRINGFLGI"/>
</dbReference>
<organism>
    <name type="scientific">Geobacter metallireducens (strain ATCC 53774 / DSM 7210 / GS-15)</name>
    <dbReference type="NCBI Taxonomy" id="269799"/>
    <lineage>
        <taxon>Bacteria</taxon>
        <taxon>Pseudomonadati</taxon>
        <taxon>Thermodesulfobacteriota</taxon>
        <taxon>Desulfuromonadia</taxon>
        <taxon>Geobacterales</taxon>
        <taxon>Geobacteraceae</taxon>
        <taxon>Geobacter</taxon>
    </lineage>
</organism>
<comment type="function">
    <text evidence="1">Assembles around the rod to form the L-ring and probably protects the motor/basal body from shearing forces during rotation.</text>
</comment>
<comment type="subunit">
    <text evidence="1">The basal body constitutes a major portion of the flagellar organelle and consists of four rings (L,P,S, and M) mounted on a central rod.</text>
</comment>
<comment type="subcellular location">
    <subcellularLocation>
        <location evidence="1">Periplasm</location>
    </subcellularLocation>
    <subcellularLocation>
        <location evidence="1">Bacterial flagellum basal body</location>
    </subcellularLocation>
</comment>
<comment type="similarity">
    <text evidence="1">Belongs to the FlgI family.</text>
</comment>